<reference key="1">
    <citation type="journal article" date="1988" name="J. Biol. Chem.">
        <title>Tissue-specific induction of murine glutathione transferase mRNAs by butylated hydroxyanisole.</title>
        <authorList>
            <person name="Pearson W.R."/>
            <person name="Reinhart J."/>
            <person name="Sisk S.C."/>
            <person name="Anderson K.S."/>
            <person name="Adler P.N."/>
        </authorList>
    </citation>
    <scope>NUCLEOTIDE SEQUENCE [MRNA]</scope>
</reference>
<reference key="2">
    <citation type="journal article" date="1998" name="Arch. Biochem. Biophys.">
        <title>Cloning, expression, and biochemical characterization of a functionally novel alpha class glutathione S-transferase with exceptional activity in the glutathione conjugation of (+)-anti-7,8-dihydroxy-9,10-oxy-7,8,9,10-tetrahydrobenzo(a)pyrene.</title>
        <authorList>
            <person name="Xia H."/>
            <person name="Pan S.S."/>
            <person name="Hu X."/>
            <person name="Srivastava S.K."/>
            <person name="Pal A."/>
            <person name="Singh S.V."/>
        </authorList>
    </citation>
    <scope>NUCLEOTIDE SEQUENCE [MRNA]</scope>
    <scope>FUNCTION</scope>
    <scope>CATALYTIC ACTIVITY</scope>
    <scope>BIOPHYSICOCHEMICAL PROPERTIES</scope>
    <scope>TISSUE SPECIFICITY</scope>
</reference>
<reference key="3">
    <citation type="journal article" date="2009" name="PLoS Biol.">
        <title>Lineage-specific biology revealed by a finished genome assembly of the mouse.</title>
        <authorList>
            <person name="Church D.M."/>
            <person name="Goodstadt L."/>
            <person name="Hillier L.W."/>
            <person name="Zody M.C."/>
            <person name="Goldstein S."/>
            <person name="She X."/>
            <person name="Bult C.J."/>
            <person name="Agarwala R."/>
            <person name="Cherry J.L."/>
            <person name="DiCuccio M."/>
            <person name="Hlavina W."/>
            <person name="Kapustin Y."/>
            <person name="Meric P."/>
            <person name="Maglott D."/>
            <person name="Birtle Z."/>
            <person name="Marques A.C."/>
            <person name="Graves T."/>
            <person name="Zhou S."/>
            <person name="Teague B."/>
            <person name="Potamousis K."/>
            <person name="Churas C."/>
            <person name="Place M."/>
            <person name="Herschleb J."/>
            <person name="Runnheim R."/>
            <person name="Forrest D."/>
            <person name="Amos-Landgraf J."/>
            <person name="Schwartz D.C."/>
            <person name="Cheng Z."/>
            <person name="Lindblad-Toh K."/>
            <person name="Eichler E.E."/>
            <person name="Ponting C.P."/>
        </authorList>
    </citation>
    <scope>NUCLEOTIDE SEQUENCE [LARGE SCALE GENOMIC DNA]</scope>
    <source>
        <strain>C57BL/6J</strain>
    </source>
</reference>
<reference key="4">
    <citation type="submission" date="2005-07" db="EMBL/GenBank/DDBJ databases">
        <authorList>
            <person name="Mural R.J."/>
            <person name="Adams M.D."/>
            <person name="Myers E.W."/>
            <person name="Smith H.O."/>
            <person name="Venter J.C."/>
        </authorList>
    </citation>
    <scope>NUCLEOTIDE SEQUENCE [LARGE SCALE GENOMIC DNA]</scope>
</reference>
<reference key="5">
    <citation type="journal article" date="2004" name="Genome Res.">
        <title>The status, quality, and expansion of the NIH full-length cDNA project: the Mammalian Gene Collection (MGC).</title>
        <authorList>
            <consortium name="The MGC Project Team"/>
        </authorList>
    </citation>
    <scope>NUCLEOTIDE SEQUENCE [LARGE SCALE MRNA]</scope>
    <source>
        <tissue>Kidney</tissue>
    </source>
</reference>
<reference key="6">
    <citation type="journal article" date="2003" name="Biochemistry">
        <title>Residues 207, 216, and 221 and the catalytic activity of mGSTA1-1 and mGSTA2-2 toward benzo[a]pyrene-(7R,8S)-diol-(9S,10R)-epoxide.</title>
        <authorList>
            <person name="Gu Y."/>
            <person name="Xiao B."/>
            <person name="Wargo H.L."/>
            <person name="Bucher M.H."/>
            <person name="Singh S.V."/>
            <person name="Ji X."/>
        </authorList>
    </citation>
    <scope>X-RAY CRYSTALLOGRAPHY (1.9 ANGSTROMS) IN COMPLEX WITH GLUTATHIONE AND SUBSTRATE ANALOG</scope>
    <scope>SUBUNIT</scope>
</reference>
<feature type="initiator methionine" description="Removed" evidence="3">
    <location>
        <position position="1"/>
    </location>
</feature>
<feature type="chain" id="PRO_0000185789" description="Glutathione S-transferase A2">
    <location>
        <begin position="2"/>
        <end position="222"/>
    </location>
</feature>
<feature type="domain" description="GST N-terminal">
    <location>
        <begin position="3"/>
        <end position="83"/>
    </location>
</feature>
<feature type="domain" description="GST C-terminal">
    <location>
        <begin position="85"/>
        <end position="208"/>
    </location>
</feature>
<feature type="binding site" evidence="2">
    <location>
        <position position="9"/>
    </location>
    <ligand>
        <name>glutathione</name>
        <dbReference type="ChEBI" id="CHEBI:57925"/>
    </ligand>
</feature>
<feature type="binding site" evidence="7">
    <location>
        <position position="45"/>
    </location>
    <ligand>
        <name>glutathione</name>
        <dbReference type="ChEBI" id="CHEBI:57925"/>
    </ligand>
</feature>
<feature type="binding site" evidence="7">
    <location>
        <begin position="54"/>
        <end position="55"/>
    </location>
    <ligand>
        <name>glutathione</name>
        <dbReference type="ChEBI" id="CHEBI:57925"/>
    </ligand>
</feature>
<feature type="binding site" evidence="7">
    <location>
        <begin position="67"/>
        <end position="68"/>
    </location>
    <ligand>
        <name>glutathione</name>
        <dbReference type="ChEBI" id="CHEBI:57925"/>
    </ligand>
</feature>
<feature type="modified residue" description="N-acetylalanine" evidence="3">
    <location>
        <position position="2"/>
    </location>
</feature>
<feature type="modified residue" description="N6-succinyllysine" evidence="3">
    <location>
        <position position="4"/>
    </location>
</feature>
<feature type="sequence conflict" description="In Ref. 1; AAA37749." evidence="6" ref="1">
    <original>H</original>
    <variation>Q</variation>
    <location>
        <position position="199"/>
    </location>
</feature>
<feature type="strand" evidence="9">
    <location>
        <begin position="6"/>
        <end position="12"/>
    </location>
</feature>
<feature type="helix" evidence="9">
    <location>
        <begin position="14"/>
        <end position="16"/>
    </location>
</feature>
<feature type="helix" evidence="9">
    <location>
        <begin position="17"/>
        <end position="26"/>
    </location>
</feature>
<feature type="strand" evidence="9">
    <location>
        <begin position="31"/>
        <end position="35"/>
    </location>
</feature>
<feature type="helix" evidence="9">
    <location>
        <begin position="38"/>
        <end position="46"/>
    </location>
</feature>
<feature type="strand" evidence="9">
    <location>
        <begin position="57"/>
        <end position="60"/>
    </location>
</feature>
<feature type="strand" evidence="9">
    <location>
        <begin position="63"/>
        <end position="67"/>
    </location>
</feature>
<feature type="helix" evidence="9">
    <location>
        <begin position="68"/>
        <end position="78"/>
    </location>
</feature>
<feature type="helix" evidence="9">
    <location>
        <begin position="86"/>
        <end position="108"/>
    </location>
</feature>
<feature type="helix" evidence="9">
    <location>
        <begin position="109"/>
        <end position="111"/>
    </location>
</feature>
<feature type="turn" evidence="9">
    <location>
        <begin position="114"/>
        <end position="116"/>
    </location>
</feature>
<feature type="helix" evidence="9">
    <location>
        <begin position="117"/>
        <end position="130"/>
    </location>
</feature>
<feature type="helix" evidence="9">
    <location>
        <begin position="132"/>
        <end position="143"/>
    </location>
</feature>
<feature type="strand" evidence="9">
    <location>
        <begin position="146"/>
        <end position="149"/>
    </location>
</feature>
<feature type="helix" evidence="9">
    <location>
        <begin position="155"/>
        <end position="171"/>
    </location>
</feature>
<feature type="helix" evidence="9">
    <location>
        <begin position="172"/>
        <end position="175"/>
    </location>
</feature>
<feature type="helix" evidence="9">
    <location>
        <begin position="179"/>
        <end position="190"/>
    </location>
</feature>
<feature type="helix" evidence="9">
    <location>
        <begin position="192"/>
        <end position="198"/>
    </location>
</feature>
<feature type="helix" evidence="9">
    <location>
        <begin position="210"/>
        <end position="219"/>
    </location>
</feature>
<dbReference type="EC" id="2.5.1.18" evidence="5"/>
<dbReference type="EMBL" id="J03958">
    <property type="protein sequence ID" value="AAA37749.1"/>
    <property type="molecule type" value="mRNA"/>
</dbReference>
<dbReference type="EMBL" id="AC138587">
    <property type="status" value="NOT_ANNOTATED_CDS"/>
    <property type="molecule type" value="Genomic_DNA"/>
</dbReference>
<dbReference type="EMBL" id="CH466522">
    <property type="protein sequence ID" value="EDL26384.1"/>
    <property type="molecule type" value="Genomic_DNA"/>
</dbReference>
<dbReference type="EMBL" id="CH466522">
    <property type="protein sequence ID" value="EDL26385.1"/>
    <property type="molecule type" value="Genomic_DNA"/>
</dbReference>
<dbReference type="EMBL" id="CH466522">
    <property type="protein sequence ID" value="EDL26386.1"/>
    <property type="molecule type" value="Genomic_DNA"/>
</dbReference>
<dbReference type="EMBL" id="CH466522">
    <property type="protein sequence ID" value="EDL26387.1"/>
    <property type="molecule type" value="Genomic_DNA"/>
</dbReference>
<dbReference type="EMBL" id="BC061133">
    <property type="protein sequence ID" value="AAH61133.1"/>
    <property type="molecule type" value="mRNA"/>
</dbReference>
<dbReference type="CCDS" id="CCDS23359.1"/>
<dbReference type="RefSeq" id="NP_032208.2">
    <property type="nucleotide sequence ID" value="NM_008182.3"/>
</dbReference>
<dbReference type="RefSeq" id="XP_006510877.1">
    <property type="nucleotide sequence ID" value="XM_006510814.2"/>
</dbReference>
<dbReference type="PDB" id="1ML6">
    <property type="method" value="X-ray"/>
    <property type="resolution" value="1.90 A"/>
    <property type="chains" value="A/B=2-222"/>
</dbReference>
<dbReference type="PDBsum" id="1ML6"/>
<dbReference type="SMR" id="P10648"/>
<dbReference type="FunCoup" id="P10648">
    <property type="interactions" value="185"/>
</dbReference>
<dbReference type="STRING" id="10090.ENSMUSP00000034902"/>
<dbReference type="iPTMnet" id="P10648"/>
<dbReference type="PhosphoSitePlus" id="P10648"/>
<dbReference type="jPOST" id="P10648"/>
<dbReference type="PaxDb" id="10090-ENSMUSP00000034902"/>
<dbReference type="PeptideAtlas" id="P10648"/>
<dbReference type="DNASU" id="14858"/>
<dbReference type="Ensembl" id="ENSMUST00000034902.12">
    <property type="protein sequence ID" value="ENSMUSP00000034902.6"/>
    <property type="gene ID" value="ENSMUSG00000057933.11"/>
</dbReference>
<dbReference type="GeneID" id="14858"/>
<dbReference type="KEGG" id="mmu:14858"/>
<dbReference type="UCSC" id="uc009quf.1">
    <property type="organism name" value="mouse"/>
</dbReference>
<dbReference type="AGR" id="MGI:95863"/>
<dbReference type="CTD" id="2939"/>
<dbReference type="MGI" id="MGI:95863">
    <property type="gene designation" value="Gsta2"/>
</dbReference>
<dbReference type="VEuPathDB" id="HostDB:ENSMUSG00000057933"/>
<dbReference type="eggNOG" id="KOG1695">
    <property type="taxonomic scope" value="Eukaryota"/>
</dbReference>
<dbReference type="GeneTree" id="ENSGT00940000154526"/>
<dbReference type="InParanoid" id="P10648"/>
<dbReference type="OMA" id="FETILMA"/>
<dbReference type="OrthoDB" id="414243at2759"/>
<dbReference type="PhylomeDB" id="P10648"/>
<dbReference type="TreeFam" id="TF105321"/>
<dbReference type="Reactome" id="R-MMU-156590">
    <property type="pathway name" value="Glutathione conjugation"/>
</dbReference>
<dbReference type="Reactome" id="R-MMU-189483">
    <property type="pathway name" value="Heme degradation"/>
</dbReference>
<dbReference type="Reactome" id="R-MMU-9748787">
    <property type="pathway name" value="Azathioprine ADME"/>
</dbReference>
<dbReference type="BioGRID-ORCS" id="14858">
    <property type="hits" value="2 hits in 41 CRISPR screens"/>
</dbReference>
<dbReference type="ChiTaRS" id="Gsta2">
    <property type="organism name" value="mouse"/>
</dbReference>
<dbReference type="EvolutionaryTrace" id="P10648"/>
<dbReference type="PRO" id="PR:P10648"/>
<dbReference type="Proteomes" id="UP000000589">
    <property type="component" value="Chromosome 9"/>
</dbReference>
<dbReference type="RNAct" id="P10648">
    <property type="molecule type" value="protein"/>
</dbReference>
<dbReference type="Bgee" id="ENSMUSG00000057933">
    <property type="expression patterns" value="Expressed in epithelium of stomach and 94 other cell types or tissues"/>
</dbReference>
<dbReference type="ExpressionAtlas" id="P10648">
    <property type="expression patterns" value="baseline and differential"/>
</dbReference>
<dbReference type="GO" id="GO:0005829">
    <property type="term" value="C:cytosol"/>
    <property type="evidence" value="ECO:0000314"/>
    <property type="project" value="FlyBase"/>
</dbReference>
<dbReference type="GO" id="GO:0005739">
    <property type="term" value="C:mitochondrion"/>
    <property type="evidence" value="ECO:0000314"/>
    <property type="project" value="FlyBase"/>
</dbReference>
<dbReference type="GO" id="GO:0004364">
    <property type="term" value="F:glutathione transferase activity"/>
    <property type="evidence" value="ECO:0000314"/>
    <property type="project" value="UniProtKB"/>
</dbReference>
<dbReference type="GO" id="GO:0006749">
    <property type="term" value="P:glutathione metabolic process"/>
    <property type="evidence" value="ECO:0000250"/>
    <property type="project" value="UniProtKB"/>
</dbReference>
<dbReference type="GO" id="GO:0009617">
    <property type="term" value="P:response to bacterium"/>
    <property type="evidence" value="ECO:0000270"/>
    <property type="project" value="MGI"/>
</dbReference>
<dbReference type="GO" id="GO:0035634">
    <property type="term" value="P:response to stilbenoid"/>
    <property type="evidence" value="ECO:0000270"/>
    <property type="project" value="UniProtKB"/>
</dbReference>
<dbReference type="CDD" id="cd03208">
    <property type="entry name" value="GST_C_Alpha"/>
    <property type="match status" value="1"/>
</dbReference>
<dbReference type="CDD" id="cd03077">
    <property type="entry name" value="GST_N_Alpha"/>
    <property type="match status" value="1"/>
</dbReference>
<dbReference type="FunFam" id="1.20.1050.10:FF:000005">
    <property type="entry name" value="Glutathione S-transferase A1"/>
    <property type="match status" value="1"/>
</dbReference>
<dbReference type="Gene3D" id="1.20.1050.10">
    <property type="match status" value="1"/>
</dbReference>
<dbReference type="Gene3D" id="3.40.30.10">
    <property type="entry name" value="Glutaredoxin"/>
    <property type="match status" value="1"/>
</dbReference>
<dbReference type="InterPro" id="IPR010987">
    <property type="entry name" value="Glutathione-S-Trfase_C-like"/>
</dbReference>
<dbReference type="InterPro" id="IPR036282">
    <property type="entry name" value="Glutathione-S-Trfase_C_sf"/>
</dbReference>
<dbReference type="InterPro" id="IPR040079">
    <property type="entry name" value="Glutathione_S-Trfase"/>
</dbReference>
<dbReference type="InterPro" id="IPR004045">
    <property type="entry name" value="Glutathione_S-Trfase_N"/>
</dbReference>
<dbReference type="InterPro" id="IPR003080">
    <property type="entry name" value="GST_alpha"/>
</dbReference>
<dbReference type="InterPro" id="IPR004046">
    <property type="entry name" value="GST_C"/>
</dbReference>
<dbReference type="InterPro" id="IPR050213">
    <property type="entry name" value="GST_superfamily"/>
</dbReference>
<dbReference type="InterPro" id="IPR036249">
    <property type="entry name" value="Thioredoxin-like_sf"/>
</dbReference>
<dbReference type="PANTHER" id="PTHR11571">
    <property type="entry name" value="GLUTATHIONE S-TRANSFERASE"/>
    <property type="match status" value="1"/>
</dbReference>
<dbReference type="PANTHER" id="PTHR11571:SF233">
    <property type="entry name" value="GLUTATHIONE S-TRANSFERASE-RELATED"/>
    <property type="match status" value="1"/>
</dbReference>
<dbReference type="Pfam" id="PF00043">
    <property type="entry name" value="GST_C"/>
    <property type="match status" value="1"/>
</dbReference>
<dbReference type="Pfam" id="PF02798">
    <property type="entry name" value="GST_N"/>
    <property type="match status" value="1"/>
</dbReference>
<dbReference type="PRINTS" id="PR01266">
    <property type="entry name" value="GSTRNSFRASEA"/>
</dbReference>
<dbReference type="SFLD" id="SFLDG01205">
    <property type="entry name" value="AMPS.1"/>
    <property type="match status" value="1"/>
</dbReference>
<dbReference type="SFLD" id="SFLDS00019">
    <property type="entry name" value="Glutathione_Transferase_(cytos"/>
    <property type="match status" value="1"/>
</dbReference>
<dbReference type="SUPFAM" id="SSF47616">
    <property type="entry name" value="GST C-terminal domain-like"/>
    <property type="match status" value="1"/>
</dbReference>
<dbReference type="SUPFAM" id="SSF52833">
    <property type="entry name" value="Thioredoxin-like"/>
    <property type="match status" value="1"/>
</dbReference>
<dbReference type="PROSITE" id="PS50405">
    <property type="entry name" value="GST_CTER"/>
    <property type="match status" value="1"/>
</dbReference>
<dbReference type="PROSITE" id="PS50404">
    <property type="entry name" value="GST_NTER"/>
    <property type="match status" value="1"/>
</dbReference>
<organism>
    <name type="scientific">Mus musculus</name>
    <name type="common">Mouse</name>
    <dbReference type="NCBI Taxonomy" id="10090"/>
    <lineage>
        <taxon>Eukaryota</taxon>
        <taxon>Metazoa</taxon>
        <taxon>Chordata</taxon>
        <taxon>Craniata</taxon>
        <taxon>Vertebrata</taxon>
        <taxon>Euteleostomi</taxon>
        <taxon>Mammalia</taxon>
        <taxon>Eutheria</taxon>
        <taxon>Euarchontoglires</taxon>
        <taxon>Glires</taxon>
        <taxon>Rodentia</taxon>
        <taxon>Myomorpha</taxon>
        <taxon>Muroidea</taxon>
        <taxon>Muridae</taxon>
        <taxon>Murinae</taxon>
        <taxon>Mus</taxon>
        <taxon>Mus</taxon>
    </lineage>
</organism>
<comment type="function">
    <text evidence="5">Catalyzes the conjugation of glutathione to a large variety of electrophilic compounds.</text>
</comment>
<comment type="catalytic activity">
    <reaction evidence="5">
        <text>RX + glutathione = an S-substituted glutathione + a halide anion + H(+)</text>
        <dbReference type="Rhea" id="RHEA:16437"/>
        <dbReference type="ChEBI" id="CHEBI:15378"/>
        <dbReference type="ChEBI" id="CHEBI:16042"/>
        <dbReference type="ChEBI" id="CHEBI:17792"/>
        <dbReference type="ChEBI" id="CHEBI:57925"/>
        <dbReference type="ChEBI" id="CHEBI:90779"/>
        <dbReference type="EC" id="2.5.1.18"/>
    </reaction>
    <physiologicalReaction direction="left-to-right" evidence="8">
        <dbReference type="Rhea" id="RHEA:16438"/>
    </physiologicalReaction>
</comment>
<comment type="biophysicochemical properties">
    <kinetics>
        <KM evidence="5">31 uM for 7,8-Dihydroxy-9,10-epoxy-7,8,9,10-tetrahydrobenzo[a]pyrene</KM>
        <Vmax evidence="5">1295.0 nmol/min/mg enzyme for 7,8-Dihydroxy-9,10-epoxy-7,8,9,10-tetrahydrobenzo[a]pyrene</Vmax>
    </kinetics>
</comment>
<comment type="subunit">
    <text evidence="1 4">Homodimer (PubMed:12549910). Heterodimer of GSTA1 and GSTA2 (By similarity).</text>
</comment>
<comment type="tissue specificity">
    <text evidence="5">Expressed in the kidney.</text>
</comment>
<comment type="similarity">
    <text evidence="6">Belongs to the GST superfamily. Alpha family.</text>
</comment>
<evidence type="ECO:0000250" key="1">
    <source>
        <dbReference type="UniProtKB" id="P09210"/>
    </source>
</evidence>
<evidence type="ECO:0000250" key="2">
    <source>
        <dbReference type="UniProtKB" id="P13745"/>
    </source>
</evidence>
<evidence type="ECO:0000250" key="3">
    <source>
        <dbReference type="UniProtKB" id="P30115"/>
    </source>
</evidence>
<evidence type="ECO:0000269" key="4">
    <source>
    </source>
</evidence>
<evidence type="ECO:0000269" key="5">
    <source>
    </source>
</evidence>
<evidence type="ECO:0000305" key="6"/>
<evidence type="ECO:0000305" key="7">
    <source>
    </source>
</evidence>
<evidence type="ECO:0000305" key="8">
    <source>
    </source>
</evidence>
<evidence type="ECO:0007829" key="9">
    <source>
        <dbReference type="PDB" id="1ML6"/>
    </source>
</evidence>
<proteinExistence type="evidence at protein level"/>
<keyword id="KW-0002">3D-structure</keyword>
<keyword id="KW-0007">Acetylation</keyword>
<keyword id="KW-1185">Reference proteome</keyword>
<keyword id="KW-0808">Transferase</keyword>
<accession>P10648</accession>
<accession>Q6P8Q1</accession>
<gene>
    <name type="primary">Gsta2</name>
</gene>
<name>GSTA2_MOUSE</name>
<sequence length="222" mass="25542">MAGKPVLHYFNARGRMECIRWLLAAAGVEFEEKFIQSPEDLEKLKKDGNLMFDQVPMVEIDGMKLVQTRAILNYIATKYDLYGKDMKERALIDMYTEGILDLTEMIGQLVLCPPDQREAKTALAKDRTKNRYLPAFEKVLKSHGQDYLVGNRLTRVDVHLLELLLYVEELDASLLTPFPLLKAFKSRISSLPNVKKFLHPGSQRKPPLDAKQIEEARKVFKF</sequence>
<protein>
    <recommendedName>
        <fullName>Glutathione S-transferase A2</fullName>
        <ecNumber evidence="5">2.5.1.18</ecNumber>
    </recommendedName>
    <alternativeName>
        <fullName>GST class-alpha member 2</fullName>
    </alternativeName>
    <alternativeName>
        <fullName>Glutathione S-transferase GT41A</fullName>
    </alternativeName>
</protein>